<protein>
    <recommendedName>
        <fullName>Pre-mRNA-splicing factor cwf17</fullName>
    </recommendedName>
    <alternativeName>
        <fullName>Complexed with cdc5 protein 17</fullName>
    </alternativeName>
</protein>
<feature type="chain" id="PRO_0000050951" description="Pre-mRNA-splicing factor cwf17">
    <location>
        <begin position="1"/>
        <end position="340"/>
    </location>
</feature>
<feature type="repeat" description="WD 1">
    <location>
        <begin position="48"/>
        <end position="87"/>
    </location>
</feature>
<feature type="repeat" description="WD 2">
    <location>
        <begin position="91"/>
        <end position="130"/>
    </location>
</feature>
<feature type="repeat" description="WD 3">
    <location>
        <begin position="133"/>
        <end position="173"/>
    </location>
</feature>
<feature type="repeat" description="WD 4">
    <location>
        <begin position="175"/>
        <end position="214"/>
    </location>
</feature>
<feature type="repeat" description="WD 5">
    <location>
        <begin position="217"/>
        <end position="256"/>
    </location>
</feature>
<feature type="repeat" description="WD 6">
    <location>
        <begin position="267"/>
        <end position="306"/>
    </location>
</feature>
<feature type="repeat" description="WD 7">
    <location>
        <begin position="308"/>
        <end position="339"/>
    </location>
</feature>
<feature type="strand" evidence="4">
    <location>
        <begin position="40"/>
        <end position="42"/>
    </location>
</feature>
<feature type="strand" evidence="4">
    <location>
        <begin position="44"/>
        <end position="47"/>
    </location>
</feature>
<feature type="strand" evidence="4">
    <location>
        <begin position="53"/>
        <end position="58"/>
    </location>
</feature>
<feature type="strand" evidence="4">
    <location>
        <begin position="62"/>
        <end position="69"/>
    </location>
</feature>
<feature type="strand" evidence="4">
    <location>
        <begin position="74"/>
        <end position="82"/>
    </location>
</feature>
<feature type="strand" evidence="4">
    <location>
        <begin position="87"/>
        <end position="89"/>
    </location>
</feature>
<feature type="strand" evidence="4">
    <location>
        <begin position="96"/>
        <end position="101"/>
    </location>
</feature>
<feature type="strand" evidence="4">
    <location>
        <begin position="105"/>
        <end position="112"/>
    </location>
</feature>
<feature type="strand" evidence="4">
    <location>
        <begin position="117"/>
        <end position="121"/>
    </location>
</feature>
<feature type="turn" evidence="4">
    <location>
        <begin position="122"/>
        <end position="125"/>
    </location>
</feature>
<feature type="strand" evidence="4">
    <location>
        <begin position="126"/>
        <end position="131"/>
    </location>
</feature>
<feature type="strand" evidence="4">
    <location>
        <begin position="138"/>
        <end position="143"/>
    </location>
</feature>
<feature type="strand" evidence="4">
    <location>
        <begin position="150"/>
        <end position="155"/>
    </location>
</feature>
<feature type="strand" evidence="4">
    <location>
        <begin position="158"/>
        <end position="164"/>
    </location>
</feature>
<feature type="turn" evidence="4">
    <location>
        <begin position="165"/>
        <end position="167"/>
    </location>
</feature>
<feature type="strand" evidence="4">
    <location>
        <begin position="169"/>
        <end position="175"/>
    </location>
</feature>
<feature type="strand" evidence="4">
    <location>
        <begin position="180"/>
        <end position="185"/>
    </location>
</feature>
<feature type="strand" evidence="4">
    <location>
        <begin position="189"/>
        <end position="199"/>
    </location>
</feature>
<feature type="strand" evidence="4">
    <location>
        <begin position="201"/>
        <end position="205"/>
    </location>
</feature>
<feature type="turn" evidence="4">
    <location>
        <begin position="206"/>
        <end position="208"/>
    </location>
</feature>
<feature type="strand" evidence="4">
    <location>
        <begin position="222"/>
        <end position="227"/>
    </location>
</feature>
<feature type="strand" evidence="4">
    <location>
        <begin position="233"/>
        <end position="238"/>
    </location>
</feature>
<feature type="strand" evidence="4">
    <location>
        <begin position="243"/>
        <end position="247"/>
    </location>
</feature>
<feature type="strand" evidence="4">
    <location>
        <begin position="257"/>
        <end position="261"/>
    </location>
</feature>
<feature type="strand" evidence="4">
    <location>
        <begin position="275"/>
        <end position="277"/>
    </location>
</feature>
<feature type="strand" evidence="4">
    <location>
        <begin position="279"/>
        <end position="281"/>
    </location>
</feature>
<feature type="strand" evidence="4">
    <location>
        <begin position="284"/>
        <end position="287"/>
    </location>
</feature>
<feature type="turn" evidence="3">
    <location>
        <begin position="289"/>
        <end position="291"/>
    </location>
</feature>
<feature type="strand" evidence="4">
    <location>
        <begin position="293"/>
        <end position="296"/>
    </location>
</feature>
<feature type="strand" evidence="4">
    <location>
        <begin position="298"/>
        <end position="300"/>
    </location>
</feature>
<feature type="strand" evidence="4">
    <location>
        <begin position="302"/>
        <end position="304"/>
    </location>
</feature>
<feature type="strand" evidence="4">
    <location>
        <begin position="313"/>
        <end position="318"/>
    </location>
</feature>
<feature type="strand" evidence="4">
    <location>
        <begin position="320"/>
        <end position="323"/>
    </location>
</feature>
<feature type="strand" evidence="4">
    <location>
        <begin position="325"/>
        <end position="336"/>
    </location>
</feature>
<gene>
    <name type="primary">cwf17</name>
    <name type="ORF">SPBC1289.11</name>
</gene>
<comment type="function">
    <text>Involved in mRNA splicing where it associates with cdc5 and the other cwf proteins as part of the spliceosome.</text>
</comment>
<comment type="subunit">
    <text evidence="1">Belongs to the 40S cdc5-associated complex (or cwf complex), a spliceosome sub-complex reminiscent of a late-stage spliceosome composed of the U2, U5 and U6 snRNAs and at least brr2, cdc5, cwf2/prp3, cwf3/syf1, cwf4/syf3, cwf5/ecm2, spp42/cwf6, cwf7/spf27, cwf8, cwf9, cwf10, cwf11, cwf12, prp45/cwf13, cwf14, cwf15, cwf16, cwf17, cwf18, cwf19, cwf20, cwf21, cwf22, cwf23, cwf24, cwf25, cwf26, cyp7/cwf27, cwf28, cwf29/ist3, lea1, msl1, prp5/cwf1, prp10, prp12/sap130, prp17, prp22, sap61, sap62, sap114, sap145, slu7, smb1, smd1, smd3, smf1, smg1 and syf2.</text>
</comment>
<comment type="interaction">
    <interactant intactId="EBI-539124">
        <id>O94620</id>
    </interactant>
    <interactant intactId="EBI-538771">
        <id>P39964</id>
        <label>cdc5</label>
    </interactant>
    <organismsDiffer>false</organismsDiffer>
    <experiments>3</experiments>
</comment>
<comment type="subcellular location">
    <subcellularLocation>
        <location evidence="2">Nucleus</location>
    </subcellularLocation>
</comment>
<proteinExistence type="evidence at protein level"/>
<keyword id="KW-0002">3D-structure</keyword>
<keyword id="KW-0507">mRNA processing</keyword>
<keyword id="KW-0508">mRNA splicing</keyword>
<keyword id="KW-0539">Nucleus</keyword>
<keyword id="KW-1185">Reference proteome</keyword>
<keyword id="KW-0677">Repeat</keyword>
<keyword id="KW-0853">WD repeat</keyword>
<evidence type="ECO:0000269" key="1">
    <source>
    </source>
</evidence>
<evidence type="ECO:0000305" key="2"/>
<evidence type="ECO:0007829" key="3">
    <source>
        <dbReference type="PDB" id="9ESH"/>
    </source>
</evidence>
<evidence type="ECO:0007829" key="4">
    <source>
        <dbReference type="PDB" id="9ESI"/>
    </source>
</evidence>
<reference key="1">
    <citation type="journal article" date="2002" name="Nature">
        <title>The genome sequence of Schizosaccharomyces pombe.</title>
        <authorList>
            <person name="Wood V."/>
            <person name="Gwilliam R."/>
            <person name="Rajandream M.A."/>
            <person name="Lyne M.H."/>
            <person name="Lyne R."/>
            <person name="Stewart A."/>
            <person name="Sgouros J.G."/>
            <person name="Peat N."/>
            <person name="Hayles J."/>
            <person name="Baker S.G."/>
            <person name="Basham D."/>
            <person name="Bowman S."/>
            <person name="Brooks K."/>
            <person name="Brown D."/>
            <person name="Brown S."/>
            <person name="Chillingworth T."/>
            <person name="Churcher C.M."/>
            <person name="Collins M."/>
            <person name="Connor R."/>
            <person name="Cronin A."/>
            <person name="Davis P."/>
            <person name="Feltwell T."/>
            <person name="Fraser A."/>
            <person name="Gentles S."/>
            <person name="Goble A."/>
            <person name="Hamlin N."/>
            <person name="Harris D.E."/>
            <person name="Hidalgo J."/>
            <person name="Hodgson G."/>
            <person name="Holroyd S."/>
            <person name="Hornsby T."/>
            <person name="Howarth S."/>
            <person name="Huckle E.J."/>
            <person name="Hunt S."/>
            <person name="Jagels K."/>
            <person name="James K.D."/>
            <person name="Jones L."/>
            <person name="Jones M."/>
            <person name="Leather S."/>
            <person name="McDonald S."/>
            <person name="McLean J."/>
            <person name="Mooney P."/>
            <person name="Moule S."/>
            <person name="Mungall K.L."/>
            <person name="Murphy L.D."/>
            <person name="Niblett D."/>
            <person name="Odell C."/>
            <person name="Oliver K."/>
            <person name="O'Neil S."/>
            <person name="Pearson D."/>
            <person name="Quail M.A."/>
            <person name="Rabbinowitsch E."/>
            <person name="Rutherford K.M."/>
            <person name="Rutter S."/>
            <person name="Saunders D."/>
            <person name="Seeger K."/>
            <person name="Sharp S."/>
            <person name="Skelton J."/>
            <person name="Simmonds M.N."/>
            <person name="Squares R."/>
            <person name="Squares S."/>
            <person name="Stevens K."/>
            <person name="Taylor K."/>
            <person name="Taylor R.G."/>
            <person name="Tivey A."/>
            <person name="Walsh S.V."/>
            <person name="Warren T."/>
            <person name="Whitehead S."/>
            <person name="Woodward J.R."/>
            <person name="Volckaert G."/>
            <person name="Aert R."/>
            <person name="Robben J."/>
            <person name="Grymonprez B."/>
            <person name="Weltjens I."/>
            <person name="Vanstreels E."/>
            <person name="Rieger M."/>
            <person name="Schaefer M."/>
            <person name="Mueller-Auer S."/>
            <person name="Gabel C."/>
            <person name="Fuchs M."/>
            <person name="Duesterhoeft A."/>
            <person name="Fritzc C."/>
            <person name="Holzer E."/>
            <person name="Moestl D."/>
            <person name="Hilbert H."/>
            <person name="Borzym K."/>
            <person name="Langer I."/>
            <person name="Beck A."/>
            <person name="Lehrach H."/>
            <person name="Reinhardt R."/>
            <person name="Pohl T.M."/>
            <person name="Eger P."/>
            <person name="Zimmermann W."/>
            <person name="Wedler H."/>
            <person name="Wambutt R."/>
            <person name="Purnelle B."/>
            <person name="Goffeau A."/>
            <person name="Cadieu E."/>
            <person name="Dreano S."/>
            <person name="Gloux S."/>
            <person name="Lelaure V."/>
            <person name="Mottier S."/>
            <person name="Galibert F."/>
            <person name="Aves S.J."/>
            <person name="Xiang Z."/>
            <person name="Hunt C."/>
            <person name="Moore K."/>
            <person name="Hurst S.M."/>
            <person name="Lucas M."/>
            <person name="Rochet M."/>
            <person name="Gaillardin C."/>
            <person name="Tallada V.A."/>
            <person name="Garzon A."/>
            <person name="Thode G."/>
            <person name="Daga R.R."/>
            <person name="Cruzado L."/>
            <person name="Jimenez J."/>
            <person name="Sanchez M."/>
            <person name="del Rey F."/>
            <person name="Benito J."/>
            <person name="Dominguez A."/>
            <person name="Revuelta J.L."/>
            <person name="Moreno S."/>
            <person name="Armstrong J."/>
            <person name="Forsburg S.L."/>
            <person name="Cerutti L."/>
            <person name="Lowe T."/>
            <person name="McCombie W.R."/>
            <person name="Paulsen I."/>
            <person name="Potashkin J."/>
            <person name="Shpakovski G.V."/>
            <person name="Ussery D."/>
            <person name="Barrell B.G."/>
            <person name="Nurse P."/>
        </authorList>
    </citation>
    <scope>NUCLEOTIDE SEQUENCE [LARGE SCALE GENOMIC DNA]</scope>
    <source>
        <strain>972 / ATCC 24843</strain>
    </source>
</reference>
<reference key="2">
    <citation type="journal article" date="2002" name="Mol. Cell. Biol.">
        <title>Proteomics analysis reveals stable multiprotein complexes in both fission and budding yeasts containing Myb-related Cdc5p/Cef1p, novel pre-mRNA splicing factors, and snRNAs.</title>
        <authorList>
            <person name="Ohi M.D."/>
            <person name="Link A.J."/>
            <person name="Ren L."/>
            <person name="Jennings J.L."/>
            <person name="McDonald W.H."/>
            <person name="Gould K.L."/>
        </authorList>
    </citation>
    <scope>IDENTIFICATION IN THE CWF COMPLEX</scope>
    <scope>IDENTIFICATION BY MASS SPECTROMETRY</scope>
</reference>
<organism>
    <name type="scientific">Schizosaccharomyces pombe (strain 972 / ATCC 24843)</name>
    <name type="common">Fission yeast</name>
    <dbReference type="NCBI Taxonomy" id="284812"/>
    <lineage>
        <taxon>Eukaryota</taxon>
        <taxon>Fungi</taxon>
        <taxon>Dikarya</taxon>
        <taxon>Ascomycota</taxon>
        <taxon>Taphrinomycotina</taxon>
        <taxon>Schizosaccharomycetes</taxon>
        <taxon>Schizosaccharomycetales</taxon>
        <taxon>Schizosaccharomycetaceae</taxon>
        <taxon>Schizosaccharomyces</taxon>
    </lineage>
</organism>
<sequence length="340" mass="37427">MDKRKESESATNGHLVKRIRIQDSSLITEGSVLQRTSDLNVPNLQMFGHTAEVLVARFDPSGSYFASGGMDRQILLWNVFGDVKNYGVLNGCKGAITDLQWSRDSRVVYCSSSDTHLMSWDAVSGQKIRKHKGHAGVVNALDVLKVGSELLTSVSDDCTMKVWDSRSKDCIKTIEEKYPLTAVAIAQQGTQVFIGGIDGAIKIWDLRNNHCSHVLKGHKDIITSLAISKDGSSLLSNSMDNTVRIFDVKPFASAQRQLQIFEGAIHGQEHNLLGVAWSRNSRFVGAGSSDKNVYVWSATGDLRYVLPGHEGSVNHVDFHPHQDIILSCSSDRTIFLGELN</sequence>
<name>CWF17_SCHPO</name>
<accession>O94620</accession>
<dbReference type="EMBL" id="CU329671">
    <property type="protein sequence ID" value="CAB38691.2"/>
    <property type="molecule type" value="Genomic_DNA"/>
</dbReference>
<dbReference type="PIR" id="T39362">
    <property type="entry name" value="T39362"/>
</dbReference>
<dbReference type="RefSeq" id="NP_596835.1">
    <property type="nucleotide sequence ID" value="NM_001023856.2"/>
</dbReference>
<dbReference type="PDB" id="3JB9">
    <property type="method" value="EM"/>
    <property type="resolution" value="3.60 A"/>
    <property type="chains" value="L=1-340"/>
</dbReference>
<dbReference type="PDB" id="9ESH">
    <property type="method" value="EM"/>
    <property type="resolution" value="3.20 A"/>
    <property type="chains" value="C=1-340"/>
</dbReference>
<dbReference type="PDB" id="9ESI">
    <property type="method" value="EM"/>
    <property type="resolution" value="3.10 A"/>
    <property type="chains" value="C=1-340"/>
</dbReference>
<dbReference type="PDBsum" id="3JB9"/>
<dbReference type="PDBsum" id="9ESH"/>
<dbReference type="PDBsum" id="9ESI"/>
<dbReference type="EMDB" id="EMD-19941"/>
<dbReference type="EMDB" id="EMD-19942"/>
<dbReference type="SMR" id="O94620"/>
<dbReference type="BioGRID" id="276528">
    <property type="interactions" value="52"/>
</dbReference>
<dbReference type="FunCoup" id="O94620">
    <property type="interactions" value="1085"/>
</dbReference>
<dbReference type="IntAct" id="O94620">
    <property type="interactions" value="8"/>
</dbReference>
<dbReference type="STRING" id="284812.O94620"/>
<dbReference type="iPTMnet" id="O94620"/>
<dbReference type="PaxDb" id="4896-SPBC1289.11.1"/>
<dbReference type="EnsemblFungi" id="SPBC1289.11.1">
    <property type="protein sequence ID" value="SPBC1289.11.1:pep"/>
    <property type="gene ID" value="SPBC1289.11"/>
</dbReference>
<dbReference type="GeneID" id="2539984"/>
<dbReference type="KEGG" id="spo:2539984"/>
<dbReference type="PomBase" id="SPBC1289.11"/>
<dbReference type="VEuPathDB" id="FungiDB:SPBC1289.11"/>
<dbReference type="eggNOG" id="KOG0265">
    <property type="taxonomic scope" value="Eukaryota"/>
</dbReference>
<dbReference type="HOGENOM" id="CLU_000288_57_2_1"/>
<dbReference type="InParanoid" id="O94620"/>
<dbReference type="OMA" id="IWDIRPY"/>
<dbReference type="PhylomeDB" id="O94620"/>
<dbReference type="Reactome" id="R-SPO-72163">
    <property type="pathway name" value="mRNA Splicing - Major Pathway"/>
</dbReference>
<dbReference type="PRO" id="PR:O94620"/>
<dbReference type="Proteomes" id="UP000002485">
    <property type="component" value="Chromosome II"/>
</dbReference>
<dbReference type="GO" id="GO:0071013">
    <property type="term" value="C:catalytic step 2 spliceosome"/>
    <property type="evidence" value="ECO:0000318"/>
    <property type="project" value="GO_Central"/>
</dbReference>
<dbReference type="GO" id="GO:0005634">
    <property type="term" value="C:nucleus"/>
    <property type="evidence" value="ECO:0007005"/>
    <property type="project" value="PomBase"/>
</dbReference>
<dbReference type="GO" id="GO:0071014">
    <property type="term" value="C:post-mRNA release spliceosomal complex"/>
    <property type="evidence" value="ECO:0000314"/>
    <property type="project" value="PomBase"/>
</dbReference>
<dbReference type="GO" id="GO:0005681">
    <property type="term" value="C:spliceosomal complex"/>
    <property type="evidence" value="ECO:0000314"/>
    <property type="project" value="PomBase"/>
</dbReference>
<dbReference type="GO" id="GO:0005682">
    <property type="term" value="C:U5 snRNP"/>
    <property type="evidence" value="ECO:0000314"/>
    <property type="project" value="PomBase"/>
</dbReference>
<dbReference type="GO" id="GO:0045292">
    <property type="term" value="P:mRNA cis splicing, via spliceosome"/>
    <property type="evidence" value="ECO:0000269"/>
    <property type="project" value="PomBase"/>
</dbReference>
<dbReference type="CDD" id="cd00200">
    <property type="entry name" value="WD40"/>
    <property type="match status" value="1"/>
</dbReference>
<dbReference type="FunFam" id="2.130.10.10:FF:000229">
    <property type="entry name" value="Small nuclear ribonucleoprotein U5 subunit 40"/>
    <property type="match status" value="1"/>
</dbReference>
<dbReference type="Gene3D" id="2.130.10.10">
    <property type="entry name" value="YVTN repeat-like/Quinoprotein amine dehydrogenase"/>
    <property type="match status" value="1"/>
</dbReference>
<dbReference type="InterPro" id="IPR020472">
    <property type="entry name" value="G-protein_beta_WD-40_rep"/>
</dbReference>
<dbReference type="InterPro" id="IPR052234">
    <property type="entry name" value="U5_snRNP_Component"/>
</dbReference>
<dbReference type="InterPro" id="IPR015943">
    <property type="entry name" value="WD40/YVTN_repeat-like_dom_sf"/>
</dbReference>
<dbReference type="InterPro" id="IPR019775">
    <property type="entry name" value="WD40_repeat_CS"/>
</dbReference>
<dbReference type="InterPro" id="IPR036322">
    <property type="entry name" value="WD40_repeat_dom_sf"/>
</dbReference>
<dbReference type="InterPro" id="IPR001680">
    <property type="entry name" value="WD40_rpt"/>
</dbReference>
<dbReference type="PANTHER" id="PTHR44006">
    <property type="entry name" value="U5 SMALL NUCLEAR RIBONUCLEOPROTEIN 40 KDA PROTEIN"/>
    <property type="match status" value="1"/>
</dbReference>
<dbReference type="PANTHER" id="PTHR44006:SF1">
    <property type="entry name" value="U5 SMALL NUCLEAR RIBONUCLEOPROTEIN 40 KDA PROTEIN"/>
    <property type="match status" value="1"/>
</dbReference>
<dbReference type="Pfam" id="PF00400">
    <property type="entry name" value="WD40"/>
    <property type="match status" value="7"/>
</dbReference>
<dbReference type="PIRSF" id="PIRSF002394">
    <property type="entry name" value="GN-bd_beta"/>
    <property type="match status" value="1"/>
</dbReference>
<dbReference type="PRINTS" id="PR00320">
    <property type="entry name" value="GPROTEINBRPT"/>
</dbReference>
<dbReference type="SMART" id="SM00320">
    <property type="entry name" value="WD40"/>
    <property type="match status" value="7"/>
</dbReference>
<dbReference type="SUPFAM" id="SSF50978">
    <property type="entry name" value="WD40 repeat-like"/>
    <property type="match status" value="1"/>
</dbReference>
<dbReference type="PROSITE" id="PS00678">
    <property type="entry name" value="WD_REPEATS_1"/>
    <property type="match status" value="2"/>
</dbReference>
<dbReference type="PROSITE" id="PS50082">
    <property type="entry name" value="WD_REPEATS_2"/>
    <property type="match status" value="7"/>
</dbReference>
<dbReference type="PROSITE" id="PS50294">
    <property type="entry name" value="WD_REPEATS_REGION"/>
    <property type="match status" value="1"/>
</dbReference>